<gene>
    <name type="primary">nodK</name>
</gene>
<reference key="1">
    <citation type="journal article" date="1994" name="Mol. Plant Microbe Interact.">
        <title>DNA sequence of the common nodulation genes of Bradyrhizobium elkanii and their phylogenetic relationship to those of other nodulating bacteria.</title>
        <authorList>
            <person name="Dobert R.C."/>
            <person name="Breil B.T."/>
            <person name="Triplett E.W."/>
        </authorList>
    </citation>
    <scope>NUCLEOTIDE SEQUENCE [GENOMIC DNA]</scope>
    <source>
        <strain>USDA 94</strain>
    </source>
</reference>
<accession>P53419</accession>
<feature type="chain" id="PRO_0000096907" description="Nodulation protein K">
    <location>
        <begin position="1"/>
        <end position="133"/>
    </location>
</feature>
<sequence length="133" mass="14199">MARLSIAIQGESKMHKTEVDLVPAACVLDELSHTDGQPSERVMPIAILGATELSQDADGVCTTRSPHWDVRAYVDHGIAGTTRASCAIVSPPTMAPLRFSQLSGDLARIVERGCRMPTHSRLISGSANSECLT</sequence>
<protein>
    <recommendedName>
        <fullName>Nodulation protein K</fullName>
    </recommendedName>
</protein>
<organism>
    <name type="scientific">Bradyrhizobium elkanii</name>
    <dbReference type="NCBI Taxonomy" id="29448"/>
    <lineage>
        <taxon>Bacteria</taxon>
        <taxon>Pseudomonadati</taxon>
        <taxon>Pseudomonadota</taxon>
        <taxon>Alphaproteobacteria</taxon>
        <taxon>Hyphomicrobiales</taxon>
        <taxon>Nitrobacteraceae</taxon>
        <taxon>Bradyrhizobium</taxon>
    </lineage>
</organism>
<proteinExistence type="predicted"/>
<keyword id="KW-0536">Nodulation</keyword>
<name>NODK_BRAEL</name>
<dbReference type="EMBL" id="U04609">
    <property type="protein sequence ID" value="AAA63599.1"/>
    <property type="molecule type" value="Genomic_DNA"/>
</dbReference>